<comment type="function">
    <text evidence="1">Catalyzes the interconversion of beta-pyran and beta-furan forms of D-ribose.</text>
</comment>
<comment type="catalytic activity">
    <reaction evidence="1">
        <text>beta-D-ribopyranose = beta-D-ribofuranose</text>
        <dbReference type="Rhea" id="RHEA:25432"/>
        <dbReference type="ChEBI" id="CHEBI:27476"/>
        <dbReference type="ChEBI" id="CHEBI:47002"/>
        <dbReference type="EC" id="5.4.99.62"/>
    </reaction>
</comment>
<comment type="pathway">
    <text evidence="1">Carbohydrate metabolism; D-ribose degradation; D-ribose 5-phosphate from beta-D-ribopyranose: step 1/2.</text>
</comment>
<comment type="subunit">
    <text evidence="1">Homodecamer.</text>
</comment>
<comment type="subcellular location">
    <subcellularLocation>
        <location evidence="1">Cytoplasm</location>
    </subcellularLocation>
</comment>
<comment type="similarity">
    <text evidence="1">Belongs to the RbsD / FucU family. RbsD subfamily.</text>
</comment>
<reference key="1">
    <citation type="journal article" date="2009" name="PLoS Genet.">
        <title>Organised genome dynamics in the Escherichia coli species results in highly diverse adaptive paths.</title>
        <authorList>
            <person name="Touchon M."/>
            <person name="Hoede C."/>
            <person name="Tenaillon O."/>
            <person name="Barbe V."/>
            <person name="Baeriswyl S."/>
            <person name="Bidet P."/>
            <person name="Bingen E."/>
            <person name="Bonacorsi S."/>
            <person name="Bouchier C."/>
            <person name="Bouvet O."/>
            <person name="Calteau A."/>
            <person name="Chiapello H."/>
            <person name="Clermont O."/>
            <person name="Cruveiller S."/>
            <person name="Danchin A."/>
            <person name="Diard M."/>
            <person name="Dossat C."/>
            <person name="Karoui M.E."/>
            <person name="Frapy E."/>
            <person name="Garry L."/>
            <person name="Ghigo J.M."/>
            <person name="Gilles A.M."/>
            <person name="Johnson J."/>
            <person name="Le Bouguenec C."/>
            <person name="Lescat M."/>
            <person name="Mangenot S."/>
            <person name="Martinez-Jehanne V."/>
            <person name="Matic I."/>
            <person name="Nassif X."/>
            <person name="Oztas S."/>
            <person name="Petit M.A."/>
            <person name="Pichon C."/>
            <person name="Rouy Z."/>
            <person name="Ruf C.S."/>
            <person name="Schneider D."/>
            <person name="Tourret J."/>
            <person name="Vacherie B."/>
            <person name="Vallenet D."/>
            <person name="Medigue C."/>
            <person name="Rocha E.P.C."/>
            <person name="Denamur E."/>
        </authorList>
    </citation>
    <scope>NUCLEOTIDE SEQUENCE [LARGE SCALE GENOMIC DNA]</scope>
    <source>
        <strain>ED1a</strain>
    </source>
</reference>
<keyword id="KW-0119">Carbohydrate metabolism</keyword>
<keyword id="KW-0963">Cytoplasm</keyword>
<keyword id="KW-0413">Isomerase</keyword>
<name>RBSD_ECO81</name>
<sequence>MKKGTVLNSDISSVISRLGHTDTLVVCDAGLPIPKSATRIDMALTQGVPSFMQVLGVVTNEMQVEAVIIAEEIKQHNPQLHETLLTHLEQLQQHQGNTIEIRYTTHEQFKQQTAESQAVIRSGECSPYANIILCAGVTF</sequence>
<protein>
    <recommendedName>
        <fullName evidence="1">D-ribose pyranase</fullName>
        <ecNumber evidence="1">5.4.99.62</ecNumber>
    </recommendedName>
</protein>
<gene>
    <name evidence="1" type="primary">rbsD</name>
    <name type="ordered locus">ECED1_4438</name>
</gene>
<proteinExistence type="inferred from homology"/>
<organism>
    <name type="scientific">Escherichia coli O81 (strain ED1a)</name>
    <dbReference type="NCBI Taxonomy" id="585397"/>
    <lineage>
        <taxon>Bacteria</taxon>
        <taxon>Pseudomonadati</taxon>
        <taxon>Pseudomonadota</taxon>
        <taxon>Gammaproteobacteria</taxon>
        <taxon>Enterobacterales</taxon>
        <taxon>Enterobacteriaceae</taxon>
        <taxon>Escherichia</taxon>
    </lineage>
</organism>
<dbReference type="EC" id="5.4.99.62" evidence="1"/>
<dbReference type="EMBL" id="CU928162">
    <property type="protein sequence ID" value="CAR10558.2"/>
    <property type="molecule type" value="Genomic_DNA"/>
</dbReference>
<dbReference type="RefSeq" id="WP_001314250.1">
    <property type="nucleotide sequence ID" value="NC_011745.1"/>
</dbReference>
<dbReference type="SMR" id="B7N2I7"/>
<dbReference type="KEGG" id="ecq:ECED1_4438"/>
<dbReference type="HOGENOM" id="CLU_135498_0_0_6"/>
<dbReference type="UniPathway" id="UPA00916">
    <property type="reaction ID" value="UER00888"/>
</dbReference>
<dbReference type="Proteomes" id="UP000000748">
    <property type="component" value="Chromosome"/>
</dbReference>
<dbReference type="GO" id="GO:0005829">
    <property type="term" value="C:cytosol"/>
    <property type="evidence" value="ECO:0007669"/>
    <property type="project" value="TreeGrafter"/>
</dbReference>
<dbReference type="GO" id="GO:0062193">
    <property type="term" value="F:D-ribose pyranase activity"/>
    <property type="evidence" value="ECO:0007669"/>
    <property type="project" value="UniProtKB-EC"/>
</dbReference>
<dbReference type="GO" id="GO:0016872">
    <property type="term" value="F:intramolecular lyase activity"/>
    <property type="evidence" value="ECO:0007669"/>
    <property type="project" value="UniProtKB-UniRule"/>
</dbReference>
<dbReference type="GO" id="GO:0048029">
    <property type="term" value="F:monosaccharide binding"/>
    <property type="evidence" value="ECO:0007669"/>
    <property type="project" value="InterPro"/>
</dbReference>
<dbReference type="GO" id="GO:0019303">
    <property type="term" value="P:D-ribose catabolic process"/>
    <property type="evidence" value="ECO:0007669"/>
    <property type="project" value="UniProtKB-UniRule"/>
</dbReference>
<dbReference type="FunFam" id="3.40.1650.10:FF:000002">
    <property type="entry name" value="D-ribose pyranase"/>
    <property type="match status" value="1"/>
</dbReference>
<dbReference type="Gene3D" id="3.40.1650.10">
    <property type="entry name" value="RbsD-like domain"/>
    <property type="match status" value="1"/>
</dbReference>
<dbReference type="HAMAP" id="MF_01661">
    <property type="entry name" value="D_rib_pyranase"/>
    <property type="match status" value="1"/>
</dbReference>
<dbReference type="InterPro" id="IPR023064">
    <property type="entry name" value="D-ribose_pyranase"/>
</dbReference>
<dbReference type="InterPro" id="IPR023750">
    <property type="entry name" value="RbsD-like_sf"/>
</dbReference>
<dbReference type="InterPro" id="IPR007721">
    <property type="entry name" value="RbsD_FucU"/>
</dbReference>
<dbReference type="NCBIfam" id="NF008761">
    <property type="entry name" value="PRK11797.1"/>
    <property type="match status" value="1"/>
</dbReference>
<dbReference type="PANTHER" id="PTHR37831">
    <property type="entry name" value="D-RIBOSE PYRANASE"/>
    <property type="match status" value="1"/>
</dbReference>
<dbReference type="PANTHER" id="PTHR37831:SF1">
    <property type="entry name" value="D-RIBOSE PYRANASE"/>
    <property type="match status" value="1"/>
</dbReference>
<dbReference type="Pfam" id="PF05025">
    <property type="entry name" value="RbsD_FucU"/>
    <property type="match status" value="1"/>
</dbReference>
<dbReference type="SUPFAM" id="SSF102546">
    <property type="entry name" value="RbsD-like"/>
    <property type="match status" value="1"/>
</dbReference>
<feature type="chain" id="PRO_1000187145" description="D-ribose pyranase">
    <location>
        <begin position="1"/>
        <end position="139"/>
    </location>
</feature>
<feature type="active site" description="Proton donor" evidence="1">
    <location>
        <position position="20"/>
    </location>
</feature>
<feature type="binding site" evidence="1">
    <location>
        <position position="28"/>
    </location>
    <ligand>
        <name>substrate</name>
    </ligand>
</feature>
<feature type="binding site" evidence="1">
    <location>
        <position position="106"/>
    </location>
    <ligand>
        <name>substrate</name>
    </ligand>
</feature>
<feature type="binding site" evidence="1">
    <location>
        <begin position="128"/>
        <end position="130"/>
    </location>
    <ligand>
        <name>substrate</name>
    </ligand>
</feature>
<evidence type="ECO:0000255" key="1">
    <source>
        <dbReference type="HAMAP-Rule" id="MF_01661"/>
    </source>
</evidence>
<accession>B7N2I7</accession>